<reference key="1">
    <citation type="submission" date="2006-08" db="EMBL/GenBank/DDBJ databases">
        <authorList>
            <consortium name="NIH - Mammalian Gene Collection (MGC) project"/>
        </authorList>
    </citation>
    <scope>NUCLEOTIDE SEQUENCE [LARGE SCALE MRNA]</scope>
    <source>
        <strain>Hereford</strain>
        <tissue>Fetal skin</tissue>
    </source>
</reference>
<gene>
    <name type="primary">C1S</name>
</gene>
<name>C1S_BOVIN</name>
<accession>Q0VCX1</accession>
<protein>
    <recommendedName>
        <fullName>Complement C1s subcomponent</fullName>
        <ecNumber evidence="1">3.4.21.42</ecNumber>
    </recommendedName>
    <alternativeName>
        <fullName>C1 esterase</fullName>
    </alternativeName>
    <alternativeName>
        <fullName>Complement component 1 subcomponent s</fullName>
    </alternativeName>
    <component>
        <recommendedName>
            <fullName>Complement C1s subcomponent heavy chain</fullName>
        </recommendedName>
    </component>
    <component>
        <recommendedName>
            <fullName>Complement C1s subcomponent light chain</fullName>
        </recommendedName>
    </component>
</protein>
<feature type="signal peptide" evidence="2">
    <location>
        <begin position="1"/>
        <end position="15"/>
    </location>
</feature>
<feature type="chain" id="PRO_0000285867" description="Complement C1s subcomponent">
    <location>
        <begin position="16"/>
        <end position="689"/>
    </location>
</feature>
<feature type="chain" id="PRO_0000285868" description="Complement C1s subcomponent heavy chain" evidence="1">
    <location>
        <begin position="16"/>
        <end position="437"/>
    </location>
</feature>
<feature type="chain" id="PRO_0000285869" description="Complement C1s subcomponent light chain" evidence="1">
    <location>
        <begin position="438"/>
        <end position="689"/>
    </location>
</feature>
<feature type="domain" description="CUB 1" evidence="3">
    <location>
        <begin position="16"/>
        <end position="130"/>
    </location>
</feature>
<feature type="domain" description="EGF-like; calcium-binding" evidence="2">
    <location>
        <begin position="131"/>
        <end position="172"/>
    </location>
</feature>
<feature type="domain" description="CUB 2" evidence="3">
    <location>
        <begin position="175"/>
        <end position="290"/>
    </location>
</feature>
<feature type="domain" description="Sushi 1" evidence="5">
    <location>
        <begin position="292"/>
        <end position="356"/>
    </location>
</feature>
<feature type="domain" description="Sushi 2" evidence="5">
    <location>
        <begin position="357"/>
        <end position="423"/>
    </location>
</feature>
<feature type="domain" description="Peptidase S1" evidence="4">
    <location>
        <begin position="438"/>
        <end position="681"/>
    </location>
</feature>
<feature type="active site" description="Charge relay system" evidence="1">
    <location>
        <position position="475"/>
    </location>
</feature>
<feature type="active site" description="Charge relay system" evidence="1">
    <location>
        <position position="529"/>
    </location>
</feature>
<feature type="active site" description="Charge relay system" evidence="1">
    <location>
        <position position="632"/>
    </location>
</feature>
<feature type="binding site" evidence="1">
    <location>
        <position position="60"/>
    </location>
    <ligand>
        <name>Ca(2+)</name>
        <dbReference type="ChEBI" id="CHEBI:29108"/>
        <label>1</label>
    </ligand>
</feature>
<feature type="binding site" evidence="1">
    <location>
        <position position="68"/>
    </location>
    <ligand>
        <name>Ca(2+)</name>
        <dbReference type="ChEBI" id="CHEBI:29108"/>
        <label>1</label>
    </ligand>
</feature>
<feature type="binding site" evidence="1">
    <location>
        <position position="113"/>
    </location>
    <ligand>
        <name>Ca(2+)</name>
        <dbReference type="ChEBI" id="CHEBI:29108"/>
        <label>1</label>
    </ligand>
</feature>
<feature type="binding site" evidence="1">
    <location>
        <position position="131"/>
    </location>
    <ligand>
        <name>Ca(2+)</name>
        <dbReference type="ChEBI" id="CHEBI:29108"/>
        <label>2</label>
    </ligand>
</feature>
<feature type="binding site" evidence="1">
    <location>
        <position position="132"/>
    </location>
    <ligand>
        <name>Ca(2+)</name>
        <dbReference type="ChEBI" id="CHEBI:29108"/>
        <label>2</label>
    </ligand>
</feature>
<feature type="binding site" evidence="1">
    <location>
        <position position="134"/>
    </location>
    <ligand>
        <name>Ca(2+)</name>
        <dbReference type="ChEBI" id="CHEBI:29108"/>
        <label>2</label>
    </ligand>
</feature>
<feature type="binding site" evidence="1">
    <location>
        <position position="149"/>
    </location>
    <ligand>
        <name>Ca(2+)</name>
        <dbReference type="ChEBI" id="CHEBI:29108"/>
        <label>2</label>
    </ligand>
</feature>
<feature type="binding site" evidence="1">
    <location>
        <position position="150"/>
    </location>
    <ligand>
        <name>Ca(2+)</name>
        <dbReference type="ChEBI" id="CHEBI:29108"/>
        <label>2</label>
    </ligand>
</feature>
<feature type="binding site" evidence="1">
    <location>
        <position position="153"/>
    </location>
    <ligand>
        <name>Ca(2+)</name>
        <dbReference type="ChEBI" id="CHEBI:29108"/>
        <label>2</label>
    </ligand>
</feature>
<feature type="binding site" evidence="1">
    <location>
        <position position="226"/>
    </location>
    <ligand>
        <name>Ca(2+)</name>
        <dbReference type="ChEBI" id="CHEBI:29108"/>
        <label>3</label>
    </ligand>
</feature>
<feature type="binding site" evidence="1">
    <location>
        <position position="236"/>
    </location>
    <ligand>
        <name>Ca(2+)</name>
        <dbReference type="ChEBI" id="CHEBI:29108"/>
        <label>3</label>
    </ligand>
</feature>
<feature type="binding site" evidence="1">
    <location>
        <position position="275"/>
    </location>
    <ligand>
        <name>Ca(2+)</name>
        <dbReference type="ChEBI" id="CHEBI:29108"/>
        <label>3</label>
    </ligand>
</feature>
<feature type="binding site" evidence="1">
    <location>
        <position position="279"/>
    </location>
    <ligand>
        <name>Ca(2+)</name>
        <dbReference type="ChEBI" id="CHEBI:29108"/>
        <label>3</label>
    </ligand>
</feature>
<feature type="site" description="Cleavage; by C1R" evidence="1">
    <location>
        <begin position="437"/>
        <end position="438"/>
    </location>
</feature>
<feature type="modified residue" description="(3R)-3-hydroxyasparagine" evidence="1">
    <location>
        <position position="149"/>
    </location>
</feature>
<feature type="glycosylation site" description="N-linked (GlcNAc...) asparagine" evidence="2">
    <location>
        <position position="64"/>
    </location>
</feature>
<feature type="glycosylation site" description="N-linked (GlcNAc...) asparagine" evidence="2">
    <location>
        <position position="174"/>
    </location>
</feature>
<feature type="glycosylation site" description="N-linked (GlcNAc...) asparagine" evidence="2">
    <location>
        <position position="406"/>
    </location>
</feature>
<feature type="disulfide bond" evidence="1">
    <location>
        <begin position="65"/>
        <end position="83"/>
    </location>
</feature>
<feature type="disulfide bond" evidence="1">
    <location>
        <begin position="135"/>
        <end position="147"/>
    </location>
</feature>
<feature type="disulfide bond" evidence="1">
    <location>
        <begin position="143"/>
        <end position="156"/>
    </location>
</feature>
<feature type="disulfide bond" evidence="1">
    <location>
        <begin position="158"/>
        <end position="171"/>
    </location>
</feature>
<feature type="disulfide bond" evidence="1">
    <location>
        <begin position="175"/>
        <end position="202"/>
    </location>
</feature>
<feature type="disulfide bond" evidence="1">
    <location>
        <begin position="234"/>
        <end position="251"/>
    </location>
</feature>
<feature type="disulfide bond" evidence="1">
    <location>
        <begin position="294"/>
        <end position="341"/>
    </location>
</feature>
<feature type="disulfide bond" evidence="1">
    <location>
        <begin position="321"/>
        <end position="354"/>
    </location>
</feature>
<feature type="disulfide bond" evidence="1">
    <location>
        <begin position="359"/>
        <end position="403"/>
    </location>
</feature>
<feature type="disulfide bond" evidence="1">
    <location>
        <begin position="386"/>
        <end position="421"/>
    </location>
</feature>
<feature type="disulfide bond" description="Interchain (between heavy and light chains)" evidence="3 4 5">
    <location>
        <begin position="425"/>
        <end position="549"/>
    </location>
</feature>
<feature type="disulfide bond" evidence="1">
    <location>
        <begin position="595"/>
        <end position="618"/>
    </location>
</feature>
<feature type="disulfide bond" evidence="1">
    <location>
        <begin position="628"/>
        <end position="660"/>
    </location>
</feature>
<keyword id="KW-0106">Calcium</keyword>
<keyword id="KW-0180">Complement pathway</keyword>
<keyword id="KW-1015">Disulfide bond</keyword>
<keyword id="KW-0245">EGF-like domain</keyword>
<keyword id="KW-0325">Glycoprotein</keyword>
<keyword id="KW-0378">Hydrolase</keyword>
<keyword id="KW-0379">Hydroxylation</keyword>
<keyword id="KW-0391">Immunity</keyword>
<keyword id="KW-0399">Innate immunity</keyword>
<keyword id="KW-0479">Metal-binding</keyword>
<keyword id="KW-0645">Protease</keyword>
<keyword id="KW-1185">Reference proteome</keyword>
<keyword id="KW-0677">Repeat</keyword>
<keyword id="KW-0964">Secreted</keyword>
<keyword id="KW-0720">Serine protease</keyword>
<keyword id="KW-0732">Signal</keyword>
<keyword id="KW-0768">Sushi</keyword>
<evidence type="ECO:0000250" key="1">
    <source>
        <dbReference type="UniProtKB" id="P09871"/>
    </source>
</evidence>
<evidence type="ECO:0000255" key="2"/>
<evidence type="ECO:0000255" key="3">
    <source>
        <dbReference type="PROSITE-ProRule" id="PRU00059"/>
    </source>
</evidence>
<evidence type="ECO:0000255" key="4">
    <source>
        <dbReference type="PROSITE-ProRule" id="PRU00274"/>
    </source>
</evidence>
<evidence type="ECO:0000255" key="5">
    <source>
        <dbReference type="PROSITE-ProRule" id="PRU00302"/>
    </source>
</evidence>
<evidence type="ECO:0000305" key="6"/>
<organism>
    <name type="scientific">Bos taurus</name>
    <name type="common">Bovine</name>
    <dbReference type="NCBI Taxonomy" id="9913"/>
    <lineage>
        <taxon>Eukaryota</taxon>
        <taxon>Metazoa</taxon>
        <taxon>Chordata</taxon>
        <taxon>Craniata</taxon>
        <taxon>Vertebrata</taxon>
        <taxon>Euteleostomi</taxon>
        <taxon>Mammalia</taxon>
        <taxon>Eutheria</taxon>
        <taxon>Laurasiatheria</taxon>
        <taxon>Artiodactyla</taxon>
        <taxon>Ruminantia</taxon>
        <taxon>Pecora</taxon>
        <taxon>Bovidae</taxon>
        <taxon>Bovinae</taxon>
        <taxon>Bos</taxon>
    </lineage>
</organism>
<sequence>MWCIVLFSLVAWVYAEPTMYGEILSPNYPQVYPNEVEKSWDIEVPAGYGIHLYFTHLDIELSENCSYDSVQIMSGGHEEGKLCGRRTNKNSNSPVVKEFHIPYSKLQVIFRSDFSNEERFTGFAAYYVAEDIDECTAFADAPCSHFCNNFLGGYFCSCPPEYFLHEDKKNCGVNCSGNVFTTMTGEVESPNYPSPYPESSRCDYQIQLEEGFRVVVTMRREDFDVEPADSEGHCPDSLLFVAGDQHFGPYCGNGFPGPLTIETQSSALNIIFQTDGSEQRKGWKFRYHGDPIPCPKEVTANSFWEPERAKYVFRDVVKITCVDGFEVVQGSVGSPSFYSTCQSNGKWSNSKLRCQPVDCGAPEPIQHGRVEDPESTLFGSITRYSCEMPYYSMECEGSEVYHCSGNGSWVNKVLGIEPPKCIAVCGTPSEPFRSTQRIFGGSIAKIENFPWQVFFSNPWAGGALIDEYWVLTAAHVVEGNDIPVMYVGSSSVVTSQLSNAQMLTAERVFIHPGWEVLDPSITRKNFDNDIALVRLRDPVKMGPKVAPICLPGTSSEYDPPENVLGLISGWGRTNVKSHVIKLRGAKLPVAPLSKCREMKGVNPGIDISSFVFTENMICAGNDKGVDSCDGDSGGAFAVQDPKENKPKFYVAGLVSWGPQCGTYGIYTRVKNYVDWIRKTMQEYSAPSVD</sequence>
<dbReference type="EC" id="3.4.21.42" evidence="1"/>
<dbReference type="EMBL" id="BC119956">
    <property type="protein sequence ID" value="AAI19957.1"/>
    <property type="status" value="ALT_INIT"/>
    <property type="molecule type" value="mRNA"/>
</dbReference>
<dbReference type="RefSeq" id="NP_001070018.1">
    <property type="nucleotide sequence ID" value="NM_001076550.1"/>
</dbReference>
<dbReference type="SMR" id="Q0VCX1"/>
<dbReference type="BioGRID" id="612993">
    <property type="interactions" value="1"/>
</dbReference>
<dbReference type="FunCoup" id="Q0VCX1">
    <property type="interactions" value="294"/>
</dbReference>
<dbReference type="STRING" id="9913.ENSBTAP00000066104"/>
<dbReference type="MEROPS" id="S01.193"/>
<dbReference type="GlyCosmos" id="Q0VCX1">
    <property type="glycosylation" value="3 sites, No reported glycans"/>
</dbReference>
<dbReference type="GlyGen" id="Q0VCX1">
    <property type="glycosylation" value="3 sites"/>
</dbReference>
<dbReference type="PaxDb" id="9913-ENSBTAP00000006358"/>
<dbReference type="PeptideAtlas" id="Q0VCX1"/>
<dbReference type="GeneID" id="767827"/>
<dbReference type="KEGG" id="bta:767827"/>
<dbReference type="CTD" id="716"/>
<dbReference type="eggNOG" id="KOG3627">
    <property type="taxonomic scope" value="Eukaryota"/>
</dbReference>
<dbReference type="InParanoid" id="Q0VCX1"/>
<dbReference type="OrthoDB" id="9985152at2759"/>
<dbReference type="Proteomes" id="UP000009136">
    <property type="component" value="Unplaced"/>
</dbReference>
<dbReference type="GO" id="GO:0005615">
    <property type="term" value="C:extracellular space"/>
    <property type="evidence" value="ECO:0000318"/>
    <property type="project" value="GO_Central"/>
</dbReference>
<dbReference type="GO" id="GO:0005509">
    <property type="term" value="F:calcium ion binding"/>
    <property type="evidence" value="ECO:0007669"/>
    <property type="project" value="InterPro"/>
</dbReference>
<dbReference type="GO" id="GO:0004252">
    <property type="term" value="F:serine-type endopeptidase activity"/>
    <property type="evidence" value="ECO:0000318"/>
    <property type="project" value="GO_Central"/>
</dbReference>
<dbReference type="GO" id="GO:0006958">
    <property type="term" value="P:complement activation, classical pathway"/>
    <property type="evidence" value="ECO:0007669"/>
    <property type="project" value="UniProtKB-KW"/>
</dbReference>
<dbReference type="GO" id="GO:0045087">
    <property type="term" value="P:innate immune response"/>
    <property type="evidence" value="ECO:0007669"/>
    <property type="project" value="UniProtKB-KW"/>
</dbReference>
<dbReference type="GO" id="GO:0006508">
    <property type="term" value="P:proteolysis"/>
    <property type="evidence" value="ECO:0007669"/>
    <property type="project" value="UniProtKB-KW"/>
</dbReference>
<dbReference type="CDD" id="cd00033">
    <property type="entry name" value="CCP"/>
    <property type="match status" value="2"/>
</dbReference>
<dbReference type="CDD" id="cd00041">
    <property type="entry name" value="CUB"/>
    <property type="match status" value="2"/>
</dbReference>
<dbReference type="CDD" id="cd00054">
    <property type="entry name" value="EGF_CA"/>
    <property type="match status" value="1"/>
</dbReference>
<dbReference type="CDD" id="cd00190">
    <property type="entry name" value="Tryp_SPc"/>
    <property type="match status" value="1"/>
</dbReference>
<dbReference type="FunFam" id="2.10.70.10:FF:000049">
    <property type="entry name" value="Complement C1s subcomponent"/>
    <property type="match status" value="1"/>
</dbReference>
<dbReference type="FunFam" id="2.40.10.10:FF:000067">
    <property type="entry name" value="Complement C1s subcomponent"/>
    <property type="match status" value="1"/>
</dbReference>
<dbReference type="FunFam" id="2.60.120.290:FF:000034">
    <property type="entry name" value="complement C1s subcomponent"/>
    <property type="match status" value="1"/>
</dbReference>
<dbReference type="FunFam" id="2.10.25.10:FF:000059">
    <property type="entry name" value="Mannan-binding lectin serine protease 1"/>
    <property type="match status" value="1"/>
</dbReference>
<dbReference type="FunFam" id="2.10.70.10:FF:000016">
    <property type="entry name" value="Mannan-binding lectin serine protease 1"/>
    <property type="match status" value="1"/>
</dbReference>
<dbReference type="FunFam" id="2.60.120.290:FF:000006">
    <property type="entry name" value="Mannan-binding lectin serine protease 1"/>
    <property type="match status" value="1"/>
</dbReference>
<dbReference type="Gene3D" id="2.10.70.10">
    <property type="entry name" value="Complement Module, domain 1"/>
    <property type="match status" value="2"/>
</dbReference>
<dbReference type="Gene3D" id="2.10.25.10">
    <property type="entry name" value="Laminin"/>
    <property type="match status" value="1"/>
</dbReference>
<dbReference type="Gene3D" id="2.60.120.290">
    <property type="entry name" value="Spermadhesin, CUB domain"/>
    <property type="match status" value="2"/>
</dbReference>
<dbReference type="Gene3D" id="2.40.10.10">
    <property type="entry name" value="Trypsin-like serine proteases"/>
    <property type="match status" value="2"/>
</dbReference>
<dbReference type="InterPro" id="IPR000859">
    <property type="entry name" value="CUB_dom"/>
</dbReference>
<dbReference type="InterPro" id="IPR001881">
    <property type="entry name" value="EGF-like_Ca-bd_dom"/>
</dbReference>
<dbReference type="InterPro" id="IPR000152">
    <property type="entry name" value="EGF-type_Asp/Asn_hydroxyl_site"/>
</dbReference>
<dbReference type="InterPro" id="IPR018097">
    <property type="entry name" value="EGF_Ca-bd_CS"/>
</dbReference>
<dbReference type="InterPro" id="IPR024175">
    <property type="entry name" value="Pept_S1A_C1r/C1S/mannan-bd"/>
</dbReference>
<dbReference type="InterPro" id="IPR009003">
    <property type="entry name" value="Peptidase_S1_PA"/>
</dbReference>
<dbReference type="InterPro" id="IPR043504">
    <property type="entry name" value="Peptidase_S1_PA_chymotrypsin"/>
</dbReference>
<dbReference type="InterPro" id="IPR001314">
    <property type="entry name" value="Peptidase_S1A"/>
</dbReference>
<dbReference type="InterPro" id="IPR035914">
    <property type="entry name" value="Sperma_CUB_dom_sf"/>
</dbReference>
<dbReference type="InterPro" id="IPR035976">
    <property type="entry name" value="Sushi/SCR/CCP_sf"/>
</dbReference>
<dbReference type="InterPro" id="IPR000436">
    <property type="entry name" value="Sushi_SCR_CCP_dom"/>
</dbReference>
<dbReference type="InterPro" id="IPR001254">
    <property type="entry name" value="Trypsin_dom"/>
</dbReference>
<dbReference type="InterPro" id="IPR033116">
    <property type="entry name" value="TRYPSIN_SER"/>
</dbReference>
<dbReference type="PANTHER" id="PTHR24255:SF18">
    <property type="entry name" value="COMPLEMENT C1S SUBCOMPONENT"/>
    <property type="match status" value="1"/>
</dbReference>
<dbReference type="PANTHER" id="PTHR24255">
    <property type="entry name" value="COMPLEMENT COMPONENT 1, S SUBCOMPONENT-RELATED"/>
    <property type="match status" value="1"/>
</dbReference>
<dbReference type="Pfam" id="PF00431">
    <property type="entry name" value="CUB"/>
    <property type="match status" value="2"/>
</dbReference>
<dbReference type="Pfam" id="PF14670">
    <property type="entry name" value="FXa_inhibition"/>
    <property type="match status" value="1"/>
</dbReference>
<dbReference type="Pfam" id="PF00084">
    <property type="entry name" value="Sushi"/>
    <property type="match status" value="2"/>
</dbReference>
<dbReference type="Pfam" id="PF00089">
    <property type="entry name" value="Trypsin"/>
    <property type="match status" value="1"/>
</dbReference>
<dbReference type="PIRSF" id="PIRSF001155">
    <property type="entry name" value="C1r_C1s_MASP"/>
    <property type="match status" value="1"/>
</dbReference>
<dbReference type="PRINTS" id="PR00722">
    <property type="entry name" value="CHYMOTRYPSIN"/>
</dbReference>
<dbReference type="SMART" id="SM00032">
    <property type="entry name" value="CCP"/>
    <property type="match status" value="2"/>
</dbReference>
<dbReference type="SMART" id="SM00042">
    <property type="entry name" value="CUB"/>
    <property type="match status" value="2"/>
</dbReference>
<dbReference type="SMART" id="SM00179">
    <property type="entry name" value="EGF_CA"/>
    <property type="match status" value="1"/>
</dbReference>
<dbReference type="SMART" id="SM00020">
    <property type="entry name" value="Tryp_SPc"/>
    <property type="match status" value="1"/>
</dbReference>
<dbReference type="SUPFAM" id="SSF57535">
    <property type="entry name" value="Complement control module/SCR domain"/>
    <property type="match status" value="2"/>
</dbReference>
<dbReference type="SUPFAM" id="SSF57196">
    <property type="entry name" value="EGF/Laminin"/>
    <property type="match status" value="1"/>
</dbReference>
<dbReference type="SUPFAM" id="SSF49854">
    <property type="entry name" value="Spermadhesin, CUB domain"/>
    <property type="match status" value="2"/>
</dbReference>
<dbReference type="SUPFAM" id="SSF50494">
    <property type="entry name" value="Trypsin-like serine proteases"/>
    <property type="match status" value="1"/>
</dbReference>
<dbReference type="PROSITE" id="PS00010">
    <property type="entry name" value="ASX_HYDROXYL"/>
    <property type="match status" value="1"/>
</dbReference>
<dbReference type="PROSITE" id="PS01180">
    <property type="entry name" value="CUB"/>
    <property type="match status" value="2"/>
</dbReference>
<dbReference type="PROSITE" id="PS01187">
    <property type="entry name" value="EGF_CA"/>
    <property type="match status" value="1"/>
</dbReference>
<dbReference type="PROSITE" id="PS50923">
    <property type="entry name" value="SUSHI"/>
    <property type="match status" value="2"/>
</dbReference>
<dbReference type="PROSITE" id="PS50240">
    <property type="entry name" value="TRYPSIN_DOM"/>
    <property type="match status" value="1"/>
</dbReference>
<dbReference type="PROSITE" id="PS00135">
    <property type="entry name" value="TRYPSIN_SER"/>
    <property type="match status" value="1"/>
</dbReference>
<proteinExistence type="evidence at transcript level"/>
<comment type="function">
    <text evidence="1">Component of the complement C1 complex, a multiprotein complex that initiates the classical pathway of the complement system, a cascade of proteins that leads to phagocytosis and breakdown of pathogens and signaling that strengthens the adaptive immune system. C1S is activated following association of the C1 complex with immunoglobulins (IgG or IgM) complexed with antigens to form antigen-antibody complexes on the surface of pathogens. C1S is cleaved and activated by C1R to generate C1s subcomponent heavy and light chains. C1s subcomponent light chain then cleaves and activates C2 and C4, the next components of the classical complement pathway.</text>
</comment>
<comment type="function">
    <molecule>Complement C1s subcomponent light chain</molecule>
    <text evidence="1">Serine protease component of the complement C1 complex, which catalyzes cleavage and activation of C2 and C4, the next components of the classical complement pathway. Also cleaves IGFBP5 and thereby inhibits the trophic effects of IGF1.</text>
</comment>
<comment type="catalytic activity">
    <molecule>Complement C1s subcomponent light chain</molecule>
    <reaction evidence="1">
        <text>Cleavage of Arg-|-Ala bond in complement component C4 to form C4a and C4b, and Lys(or Arg)-|-Lys bond in complement component C2 to form C2a and C2b: the 'classical' pathway C3 convertase.</text>
        <dbReference type="EC" id="3.4.21.42"/>
    </reaction>
</comment>
<comment type="activity regulation">
    <text evidence="1">Cleaved and activated by C1R. Immunoglobulin-binding promotes autoactivation of C1R, which results in the cleavage of the Arg-Ile bond in the catalytic domain. Inhibited by C1 inhibitor (SERPING1).</text>
</comment>
<comment type="subunit">
    <text evidence="1">Core component of the complement C1 complex, a calcium-dependent complex composed of 1 molecule of the C1Q subcomplex, 2 molecules of C1R and 2 molecules of C1S. The C1Q subcomplex is composed 18 subunits: 3 chains of C1QA, C1QB, and C1QC trimerize to form 6 collagen-like triple helices connected to six globular ligand-recognition modules.</text>
</comment>
<comment type="subcellular location">
    <subcellularLocation>
        <location evidence="1">Secreted</location>
    </subcellularLocation>
    <subcellularLocation>
        <location evidence="1">Cell surface</location>
    </subcellularLocation>
    <text evidence="1">Recruited to the surface of pathogens by the C1Q subcomplex.</text>
</comment>
<comment type="PTM">
    <text evidence="1">Cleaved and activated by C1R to generate Complement C1s subcomponent heavy and light chains.</text>
</comment>
<comment type="PTM">
    <text evidence="1">The iron and 2-oxoglutarate dependent 3-hydroxylation of aspartate and asparagine is (R) stereospecific within EGF domains.</text>
</comment>
<comment type="similarity">
    <text evidence="4">Belongs to the peptidase S1 family.</text>
</comment>
<comment type="sequence caution" evidence="6">
    <conflict type="erroneous initiation">
        <sequence resource="EMBL-CDS" id="AAI19957"/>
    </conflict>
</comment>